<keyword id="KW-0012">Acyltransferase</keyword>
<keyword id="KW-0028">Amino-acid biosynthesis</keyword>
<keyword id="KW-0055">Arginine biosynthesis</keyword>
<keyword id="KW-0068">Autocatalytic cleavage</keyword>
<keyword id="KW-0496">Mitochondrion</keyword>
<keyword id="KW-0511">Multifunctional enzyme</keyword>
<keyword id="KW-0808">Transferase</keyword>
<keyword id="KW-0809">Transit peptide</keyword>
<protein>
    <recommendedName>
        <fullName evidence="1">Arginine biosynthesis bifunctional protein ArgJ, mitochondrial</fullName>
    </recommendedName>
    <domain>
        <recommendedName>
            <fullName evidence="1">Glutamate N-acetyltransferase</fullName>
            <shortName evidence="1">GAT</shortName>
            <ecNumber evidence="1">2.3.1.35</ecNumber>
        </recommendedName>
        <alternativeName>
            <fullName evidence="1">Ornithine acetyltransferase</fullName>
            <shortName evidence="1">OATase</shortName>
        </alternativeName>
        <alternativeName>
            <fullName evidence="1">Ornithine transacetylase</fullName>
        </alternativeName>
    </domain>
    <domain>
        <recommendedName>
            <fullName evidence="1">Amino-acid acetyltransferase</fullName>
            <ecNumber evidence="1">2.3.1.1</ecNumber>
        </recommendedName>
        <alternativeName>
            <fullName evidence="1">N-acetylglutamate synthase</fullName>
            <shortName evidence="1">AGS</shortName>
        </alternativeName>
    </domain>
    <component>
        <recommendedName>
            <fullName evidence="1">Arginine biosynthesis bifunctional protein ArgJ alpha chain</fullName>
        </recommendedName>
    </component>
    <component>
        <recommendedName>
            <fullName evidence="1">Arginine biosynthesis bifunctional protein ArgJ beta chain</fullName>
        </recommendedName>
    </component>
</protein>
<sequence>MRISSTLLQRSKQLIDKYALYVPKTGSFPKGFEVGYTASGVKKNGSLDLGVILNTNKSRPSTAAAVFTTNKFKAAPVLTSKKVLETARGKNINAIVVNSGCANSVTGDLGMKDAQVMIDLVNDKIGQKNSTLVMSTGVIGQRLQMDKISTGINKIFGEEKFGSDFNSWLNVAKSICTTDTFPKLVTSRFKLPSGTEYTLTGMAKGAGMICPNMATLLGFIVTDLPIESKALQKMLTFATTRSFNCISVDGDMSTNDTICMLANGAIDTKEINEDSKDFEQVKLQVTEFAQRLAQLVVRDGEGSTKFVTVNVKNALHFEDAKIIAESISNSMLVKTALYGQDANWGRILCAIGYAKLNDLKSLDVNKINVSFIATDNSEPRELKLVANGVPQLEIDETRASEILALNDLEVSVDLGTGDQAAQFWTCDLSHEYVTINGDYRS</sequence>
<reference key="1">
    <citation type="journal article" date="2008" name="FEMS Yeast Res.">
        <title>Comparative genome analysis of a Saccharomyces cerevisiae wine strain.</title>
        <authorList>
            <person name="Borneman A.R."/>
            <person name="Forgan A.H."/>
            <person name="Pretorius I.S."/>
            <person name="Chambers P.J."/>
        </authorList>
    </citation>
    <scope>NUCLEOTIDE SEQUENCE [LARGE SCALE GENOMIC DNA]</scope>
    <source>
        <strain>AWRI1631</strain>
    </source>
</reference>
<accession>B5VPI9</accession>
<feature type="transit peptide" description="Mitochondrion" evidence="1">
    <location>
        <begin position="1"/>
        <end position="8"/>
    </location>
</feature>
<feature type="chain" id="PRO_0000398096" description="Arginine biosynthesis bifunctional protein ArgJ alpha chain" evidence="1">
    <location>
        <begin position="9"/>
        <end position="214"/>
    </location>
</feature>
<feature type="chain" id="PRO_0000398097" description="Arginine biosynthesis bifunctional protein ArgJ beta chain" evidence="1">
    <location>
        <begin position="215"/>
        <end position="441"/>
    </location>
</feature>
<feature type="active site" description="Nucleophile" evidence="1">
    <location>
        <position position="215"/>
    </location>
</feature>
<feature type="binding site" evidence="1">
    <location>
        <position position="177"/>
    </location>
    <ligand>
        <name>substrate</name>
    </ligand>
</feature>
<feature type="binding site" evidence="1">
    <location>
        <position position="204"/>
    </location>
    <ligand>
        <name>substrate</name>
    </ligand>
</feature>
<feature type="binding site" evidence="1">
    <location>
        <position position="215"/>
    </location>
    <ligand>
        <name>substrate</name>
    </ligand>
</feature>
<feature type="binding site" evidence="1">
    <location>
        <position position="301"/>
    </location>
    <ligand>
        <name>substrate</name>
    </ligand>
</feature>
<feature type="binding site" evidence="1">
    <location>
        <position position="436"/>
    </location>
    <ligand>
        <name>substrate</name>
    </ligand>
</feature>
<feature type="binding site" evidence="1">
    <location>
        <position position="441"/>
    </location>
    <ligand>
        <name>substrate</name>
    </ligand>
</feature>
<feature type="site" description="Involved in the stabilization of negative charge on the oxyanion by the formation of the oxyanion hole" evidence="1">
    <location>
        <position position="136"/>
    </location>
</feature>
<feature type="site" description="Involved in the stabilization of negative charge on the oxyanion by the formation of the oxyanion hole" evidence="1">
    <location>
        <position position="137"/>
    </location>
</feature>
<feature type="site" description="Cleavage; by autolysis" evidence="1">
    <location>
        <begin position="214"/>
        <end position="215"/>
    </location>
</feature>
<evidence type="ECO:0000255" key="1">
    <source>
        <dbReference type="HAMAP-Rule" id="MF_03124"/>
    </source>
</evidence>
<proteinExistence type="inferred from homology"/>
<dbReference type="EC" id="2.3.1.35" evidence="1"/>
<dbReference type="EC" id="2.3.1.1" evidence="1"/>
<dbReference type="EMBL" id="ABSV01001810">
    <property type="protein sequence ID" value="EDZ70156.1"/>
    <property type="molecule type" value="Genomic_DNA"/>
</dbReference>
<dbReference type="SMR" id="B5VPI9"/>
<dbReference type="MEROPS" id="T05.001"/>
<dbReference type="UniPathway" id="UPA00068">
    <property type="reaction ID" value="UER00106"/>
</dbReference>
<dbReference type="UniPathway" id="UPA00068">
    <property type="reaction ID" value="UER00111"/>
</dbReference>
<dbReference type="Proteomes" id="UP000008988">
    <property type="component" value="Unassembled WGS sequence"/>
</dbReference>
<dbReference type="GO" id="GO:0005759">
    <property type="term" value="C:mitochondrial matrix"/>
    <property type="evidence" value="ECO:0007669"/>
    <property type="project" value="UniProtKB-SubCell"/>
</dbReference>
<dbReference type="GO" id="GO:0004358">
    <property type="term" value="F:glutamate N-acetyltransferase activity"/>
    <property type="evidence" value="ECO:0007669"/>
    <property type="project" value="UniProtKB-UniRule"/>
</dbReference>
<dbReference type="GO" id="GO:0004042">
    <property type="term" value="F:L-glutamate N-acetyltransferase activity"/>
    <property type="evidence" value="ECO:0007669"/>
    <property type="project" value="UniProtKB-UniRule"/>
</dbReference>
<dbReference type="GO" id="GO:0006526">
    <property type="term" value="P:L-arginine biosynthetic process"/>
    <property type="evidence" value="ECO:0007669"/>
    <property type="project" value="UniProtKB-UniRule"/>
</dbReference>
<dbReference type="GO" id="GO:0006592">
    <property type="term" value="P:ornithine biosynthetic process"/>
    <property type="evidence" value="ECO:0007669"/>
    <property type="project" value="TreeGrafter"/>
</dbReference>
<dbReference type="CDD" id="cd02152">
    <property type="entry name" value="OAT"/>
    <property type="match status" value="1"/>
</dbReference>
<dbReference type="FunFam" id="3.10.20.340:FF:000002">
    <property type="entry name" value="Arginine biosynthesis bifunctional protein ArgJ, mitochondrial"/>
    <property type="match status" value="1"/>
</dbReference>
<dbReference type="FunFam" id="3.30.2330.10:FF:000001">
    <property type="entry name" value="Arginine biosynthesis bifunctional protein ArgJ, mitochondrial"/>
    <property type="match status" value="1"/>
</dbReference>
<dbReference type="FunFam" id="3.60.70.12:FF:000002">
    <property type="entry name" value="Arginine biosynthesis bifunctional protein ArgJ, mitochondrial"/>
    <property type="match status" value="1"/>
</dbReference>
<dbReference type="Gene3D" id="3.30.2330.10">
    <property type="entry name" value="arginine biosynthesis bifunctional protein suprefamily"/>
    <property type="match status" value="1"/>
</dbReference>
<dbReference type="Gene3D" id="3.10.20.340">
    <property type="entry name" value="ArgJ beta chain, C-terminal domain"/>
    <property type="match status" value="1"/>
</dbReference>
<dbReference type="Gene3D" id="3.60.70.12">
    <property type="entry name" value="L-amino peptidase D-ALA esterase/amidase"/>
    <property type="match status" value="1"/>
</dbReference>
<dbReference type="HAMAP" id="MF_01106">
    <property type="entry name" value="ArgJ"/>
    <property type="match status" value="1"/>
</dbReference>
<dbReference type="InterPro" id="IPR002813">
    <property type="entry name" value="Arg_biosynth_ArgJ"/>
</dbReference>
<dbReference type="InterPro" id="IPR016117">
    <property type="entry name" value="ArgJ-like_dom_sf"/>
</dbReference>
<dbReference type="InterPro" id="IPR042195">
    <property type="entry name" value="ArgJ_beta_C"/>
</dbReference>
<dbReference type="NCBIfam" id="TIGR00120">
    <property type="entry name" value="ArgJ"/>
    <property type="match status" value="1"/>
</dbReference>
<dbReference type="NCBIfam" id="NF003802">
    <property type="entry name" value="PRK05388.1"/>
    <property type="match status" value="1"/>
</dbReference>
<dbReference type="PANTHER" id="PTHR23100">
    <property type="entry name" value="ARGININE BIOSYNTHESIS BIFUNCTIONAL PROTEIN ARGJ"/>
    <property type="match status" value="1"/>
</dbReference>
<dbReference type="PANTHER" id="PTHR23100:SF0">
    <property type="entry name" value="ARGININE BIOSYNTHESIS BIFUNCTIONAL PROTEIN ARGJ, MITOCHONDRIAL"/>
    <property type="match status" value="1"/>
</dbReference>
<dbReference type="Pfam" id="PF01960">
    <property type="entry name" value="ArgJ"/>
    <property type="match status" value="1"/>
</dbReference>
<dbReference type="SUPFAM" id="SSF56266">
    <property type="entry name" value="DmpA/ArgJ-like"/>
    <property type="match status" value="1"/>
</dbReference>
<organism>
    <name type="scientific">Saccharomyces cerevisiae (strain AWRI1631)</name>
    <name type="common">Baker's yeast</name>
    <dbReference type="NCBI Taxonomy" id="545124"/>
    <lineage>
        <taxon>Eukaryota</taxon>
        <taxon>Fungi</taxon>
        <taxon>Dikarya</taxon>
        <taxon>Ascomycota</taxon>
        <taxon>Saccharomycotina</taxon>
        <taxon>Saccharomycetes</taxon>
        <taxon>Saccharomycetales</taxon>
        <taxon>Saccharomycetaceae</taxon>
        <taxon>Saccharomyces</taxon>
    </lineage>
</organism>
<comment type="function">
    <text evidence="1">Catalyzes two activities which are involved in the cyclic version of arginine biosynthesis: the synthesis of acetylglutamate from glutamate and acetyl-CoA, and of ornithine by transacetylation between acetylornithine and glutamate.</text>
</comment>
<comment type="catalytic activity">
    <reaction evidence="1">
        <text>N(2)-acetyl-L-ornithine + L-glutamate = N-acetyl-L-glutamate + L-ornithine</text>
        <dbReference type="Rhea" id="RHEA:15349"/>
        <dbReference type="ChEBI" id="CHEBI:29985"/>
        <dbReference type="ChEBI" id="CHEBI:44337"/>
        <dbReference type="ChEBI" id="CHEBI:46911"/>
        <dbReference type="ChEBI" id="CHEBI:57805"/>
        <dbReference type="EC" id="2.3.1.35"/>
    </reaction>
</comment>
<comment type="catalytic activity">
    <reaction evidence="1">
        <text>L-glutamate + acetyl-CoA = N-acetyl-L-glutamate + CoA + H(+)</text>
        <dbReference type="Rhea" id="RHEA:24292"/>
        <dbReference type="ChEBI" id="CHEBI:15378"/>
        <dbReference type="ChEBI" id="CHEBI:29985"/>
        <dbReference type="ChEBI" id="CHEBI:44337"/>
        <dbReference type="ChEBI" id="CHEBI:57287"/>
        <dbReference type="ChEBI" id="CHEBI:57288"/>
        <dbReference type="EC" id="2.3.1.1"/>
    </reaction>
</comment>
<comment type="pathway">
    <text evidence="1">Amino-acid biosynthesis; L-arginine biosynthesis; L-ornithine and N-acetyl-L-glutamate from L-glutamate and N(2)-acetyl-L-ornithine (cyclic): step 1/1.</text>
</comment>
<comment type="pathway">
    <text evidence="1">Amino-acid biosynthesis; L-arginine biosynthesis; N(2)-acetyl-L-ornithine from L-glutamate: step 1/4.</text>
</comment>
<comment type="subunit">
    <text evidence="1">Heterodimer of an alpha and a beta chain.</text>
</comment>
<comment type="subcellular location">
    <subcellularLocation>
        <location evidence="1">Mitochondrion matrix</location>
    </subcellularLocation>
</comment>
<comment type="PTM">
    <text evidence="1">The alpha and beta chains are autoproteolytically processed from a single precursor protein within the mitochondrion.</text>
</comment>
<comment type="similarity">
    <text evidence="1">Belongs to the ArgJ family.</text>
</comment>
<name>ARGJ_YEAS6</name>
<gene>
    <name evidence="1" type="primary">ARG7</name>
    <name type="ORF">AWRI1631_132020</name>
</gene>